<accession>Q75EC0</accession>
<dbReference type="EMBL" id="AE016814">
    <property type="protein sequence ID" value="AAS50521.1"/>
    <property type="molecule type" value="Genomic_DNA"/>
</dbReference>
<dbReference type="RefSeq" id="NP_982697.1">
    <property type="nucleotide sequence ID" value="NM_208050.1"/>
</dbReference>
<dbReference type="SMR" id="Q75EC0"/>
<dbReference type="FunCoup" id="Q75EC0">
    <property type="interactions" value="274"/>
</dbReference>
<dbReference type="STRING" id="284811.Q75EC0"/>
<dbReference type="EnsemblFungi" id="AAS50521">
    <property type="protein sequence ID" value="AAS50521"/>
    <property type="gene ID" value="AGOS_AAR154W"/>
</dbReference>
<dbReference type="GeneID" id="4618713"/>
<dbReference type="KEGG" id="ago:AGOS_AAR154W"/>
<dbReference type="eggNOG" id="KOG1764">
    <property type="taxonomic scope" value="Eukaryota"/>
</dbReference>
<dbReference type="HOGENOM" id="CLU_024459_1_1_1"/>
<dbReference type="InParanoid" id="Q75EC0"/>
<dbReference type="OMA" id="MAPTNLC"/>
<dbReference type="OrthoDB" id="449052at2759"/>
<dbReference type="Proteomes" id="UP000000591">
    <property type="component" value="Chromosome I"/>
</dbReference>
<dbReference type="GO" id="GO:0005737">
    <property type="term" value="C:cytoplasm"/>
    <property type="evidence" value="ECO:0007669"/>
    <property type="project" value="UniProtKB-SubCell"/>
</dbReference>
<dbReference type="GO" id="GO:0005634">
    <property type="term" value="C:nucleus"/>
    <property type="evidence" value="ECO:0007669"/>
    <property type="project" value="UniProtKB-SubCell"/>
</dbReference>
<dbReference type="GO" id="GO:0004865">
    <property type="term" value="F:protein serine/threonine phosphatase inhibitor activity"/>
    <property type="evidence" value="ECO:0000318"/>
    <property type="project" value="GO_Central"/>
</dbReference>
<dbReference type="GO" id="GO:0042149">
    <property type="term" value="P:cellular response to glucose starvation"/>
    <property type="evidence" value="ECO:0000318"/>
    <property type="project" value="GO_Central"/>
</dbReference>
<dbReference type="GO" id="GO:0030071">
    <property type="term" value="P:regulation of mitotic metaphase/anaphase transition"/>
    <property type="evidence" value="ECO:0007669"/>
    <property type="project" value="InterPro"/>
</dbReference>
<dbReference type="FunFam" id="3.10.580.10:FF:000035">
    <property type="entry name" value="Protein SDS23"/>
    <property type="match status" value="1"/>
</dbReference>
<dbReference type="FunFam" id="3.10.580.10:FF:000043">
    <property type="entry name" value="Sds23p"/>
    <property type="match status" value="1"/>
</dbReference>
<dbReference type="Gene3D" id="3.10.580.10">
    <property type="entry name" value="CBS-domain"/>
    <property type="match status" value="2"/>
</dbReference>
<dbReference type="InterPro" id="IPR050511">
    <property type="entry name" value="AMPK_gamma/SDS23_families"/>
</dbReference>
<dbReference type="InterPro" id="IPR000644">
    <property type="entry name" value="CBS_dom"/>
</dbReference>
<dbReference type="InterPro" id="IPR046342">
    <property type="entry name" value="CBS_dom_sf"/>
</dbReference>
<dbReference type="InterPro" id="IPR016711">
    <property type="entry name" value="Ssd23"/>
</dbReference>
<dbReference type="PANTHER" id="PTHR13780">
    <property type="entry name" value="AMP-ACTIVATED PROTEIN KINASE, GAMMA REGULATORY SUBUNIT"/>
    <property type="match status" value="1"/>
</dbReference>
<dbReference type="PANTHER" id="PTHR13780:SF36">
    <property type="entry name" value="CBS DOMAIN-CONTAINING PROTEIN"/>
    <property type="match status" value="1"/>
</dbReference>
<dbReference type="Pfam" id="PF00571">
    <property type="entry name" value="CBS"/>
    <property type="match status" value="3"/>
</dbReference>
<dbReference type="PIRSF" id="PIRSF018148">
    <property type="entry name" value="UCP018148_CBS_YBR214w"/>
    <property type="match status" value="1"/>
</dbReference>
<dbReference type="SMART" id="SM00116">
    <property type="entry name" value="CBS"/>
    <property type="match status" value="3"/>
</dbReference>
<dbReference type="SUPFAM" id="SSF54631">
    <property type="entry name" value="CBS-domain pair"/>
    <property type="match status" value="2"/>
</dbReference>
<dbReference type="PROSITE" id="PS51371">
    <property type="entry name" value="CBS"/>
    <property type="match status" value="4"/>
</dbReference>
<reference key="1">
    <citation type="journal article" date="2004" name="Science">
        <title>The Ashbya gossypii genome as a tool for mapping the ancient Saccharomyces cerevisiae genome.</title>
        <authorList>
            <person name="Dietrich F.S."/>
            <person name="Voegeli S."/>
            <person name="Brachat S."/>
            <person name="Lerch A."/>
            <person name="Gates K."/>
            <person name="Steiner S."/>
            <person name="Mohr C."/>
            <person name="Poehlmann R."/>
            <person name="Luedi P."/>
            <person name="Choi S."/>
            <person name="Wing R.A."/>
            <person name="Flavier A."/>
            <person name="Gaffney T.D."/>
            <person name="Philippsen P."/>
        </authorList>
    </citation>
    <scope>NUCLEOTIDE SEQUENCE [LARGE SCALE GENOMIC DNA]</scope>
    <source>
        <strain>ATCC 10895 / CBS 109.51 / FGSC 9923 / NRRL Y-1056</strain>
    </source>
</reference>
<reference key="2">
    <citation type="journal article" date="2013" name="G3 (Bethesda)">
        <title>Genomes of Ashbya fungi isolated from insects reveal four mating-type loci, numerous translocations, lack of transposons, and distinct gene duplications.</title>
        <authorList>
            <person name="Dietrich F.S."/>
            <person name="Voegeli S."/>
            <person name="Kuo S."/>
            <person name="Philippsen P."/>
        </authorList>
    </citation>
    <scope>GENOME REANNOTATION</scope>
    <source>
        <strain>ATCC 10895 / CBS 109.51 / FGSC 9923 / NRRL Y-1056</strain>
    </source>
</reference>
<organism>
    <name type="scientific">Eremothecium gossypii (strain ATCC 10895 / CBS 109.51 / FGSC 9923 / NRRL Y-1056)</name>
    <name type="common">Yeast</name>
    <name type="synonym">Ashbya gossypii</name>
    <dbReference type="NCBI Taxonomy" id="284811"/>
    <lineage>
        <taxon>Eukaryota</taxon>
        <taxon>Fungi</taxon>
        <taxon>Dikarya</taxon>
        <taxon>Ascomycota</taxon>
        <taxon>Saccharomycotina</taxon>
        <taxon>Saccharomycetes</taxon>
        <taxon>Saccharomycetales</taxon>
        <taxon>Saccharomycetaceae</taxon>
        <taxon>Eremothecium</taxon>
    </lineage>
</organism>
<protein>
    <recommendedName>
        <fullName>Protein SDS23</fullName>
    </recommendedName>
</protein>
<gene>
    <name type="primary">SDS23</name>
    <name type="ordered locus">AAR154W</name>
</gene>
<comment type="function">
    <text evidence="1">Involved in DNA replication and cell separation.</text>
</comment>
<comment type="subcellular location">
    <subcellularLocation>
        <location evidence="1">Cytoplasm</location>
    </subcellularLocation>
    <subcellularLocation>
        <location evidence="1">Nucleus</location>
    </subcellularLocation>
</comment>
<comment type="similarity">
    <text evidence="4">Belongs to the SDS23 family.</text>
</comment>
<evidence type="ECO:0000250" key="1"/>
<evidence type="ECO:0000255" key="2">
    <source>
        <dbReference type="PROSITE-ProRule" id="PRU00703"/>
    </source>
</evidence>
<evidence type="ECO:0000256" key="3">
    <source>
        <dbReference type="SAM" id="MobiDB-lite"/>
    </source>
</evidence>
<evidence type="ECO:0000305" key="4"/>
<feature type="chain" id="PRO_0000324945" description="Protein SDS23">
    <location>
        <begin position="1"/>
        <end position="487"/>
    </location>
</feature>
<feature type="domain" description="CBS 1" evidence="2">
    <location>
        <begin position="105"/>
        <end position="165"/>
    </location>
</feature>
<feature type="domain" description="CBS 2" evidence="2">
    <location>
        <begin position="189"/>
        <end position="248"/>
    </location>
</feature>
<feature type="domain" description="CBS 3" evidence="2">
    <location>
        <begin position="274"/>
        <end position="333"/>
    </location>
</feature>
<feature type="domain" description="CBS 4" evidence="2">
    <location>
        <begin position="396"/>
        <end position="469"/>
    </location>
</feature>
<feature type="region of interest" description="Disordered" evidence="3">
    <location>
        <begin position="1"/>
        <end position="39"/>
    </location>
</feature>
<feature type="region of interest" description="Disordered" evidence="3">
    <location>
        <begin position="56"/>
        <end position="84"/>
    </location>
</feature>
<feature type="region of interest" description="Disordered" evidence="3">
    <location>
        <begin position="406"/>
        <end position="439"/>
    </location>
</feature>
<feature type="compositionally biased region" description="Low complexity" evidence="3">
    <location>
        <begin position="70"/>
        <end position="84"/>
    </location>
</feature>
<feature type="compositionally biased region" description="Low complexity" evidence="3">
    <location>
        <begin position="414"/>
        <end position="430"/>
    </location>
</feature>
<proteinExistence type="inferred from homology"/>
<keyword id="KW-0129">CBS domain</keyword>
<keyword id="KW-0963">Cytoplasm</keyword>
<keyword id="KW-0539">Nucleus</keyword>
<keyword id="KW-1185">Reference proteome</keyword>
<keyword id="KW-0677">Repeat</keyword>
<name>SDS23_EREGS</name>
<sequence>MREKQQGTTGAGGMSSGAAAASPGQRHASIVEMLSTPPPAIVVQTGMEDENVRATGGETAADGDERRTLSRQSSTSSTESHASATSCLTKVHAQKWQHIELSQLVEENKLVFINAEMSVEEAFNTLVEHNLTSLPVERYPGDMDCVTFDYNDLNSYLLLVLGKTTVADEEITRQCQSGQPVPVGRIVKLTPKNPFYKVPETEDLSTVMGILGSGVHRVAIVDSTSSSIRGILSQRRLMKYLWDNARQFSNLEVLLNSSLQKLGIGVLDPHTPPTSRQSRVISILDTEPLLVALHKMHTERISSIAVIDHQGMLLGNISVTDVKQVTRTSQYPLLHNTCRHFISVILNNRGLEMGKDSFPIFHVYPTSSLARTVAKLVATKAHRLWIVQPVEQGVLVSPPVAPTTIDGSSEFSSRHVSPSPAPSPAGSHGPLTTSASPLGTLDKEYSTGKLIGVVSLTDILGLLARKHTENKLVDPLSARRQRGSVAR</sequence>